<keyword id="KW-0067">ATP-binding</keyword>
<keyword id="KW-0227">DNA damage</keyword>
<keyword id="KW-0234">DNA repair</keyword>
<keyword id="KW-0238">DNA-binding</keyword>
<keyword id="KW-0547">Nucleotide-binding</keyword>
<keyword id="KW-0539">Nucleus</keyword>
<keyword id="KW-1185">Reference proteome</keyword>
<dbReference type="EMBL" id="CH408156">
    <property type="protein sequence ID" value="EDK37709.2"/>
    <property type="molecule type" value="Genomic_DNA"/>
</dbReference>
<dbReference type="RefSeq" id="XP_001486136.1">
    <property type="nucleotide sequence ID" value="XM_001486086.1"/>
</dbReference>
<dbReference type="SMR" id="A5DEV6"/>
<dbReference type="FunCoup" id="A5DEV6">
    <property type="interactions" value="803"/>
</dbReference>
<dbReference type="STRING" id="294746.A5DEV6"/>
<dbReference type="GeneID" id="5127810"/>
<dbReference type="KEGG" id="pgu:PGUG_01807"/>
<dbReference type="eggNOG" id="KOG0218">
    <property type="taxonomic scope" value="Eukaryota"/>
</dbReference>
<dbReference type="HOGENOM" id="CLU_002472_0_2_1"/>
<dbReference type="InParanoid" id="A5DEV6"/>
<dbReference type="OMA" id="INMHAAR"/>
<dbReference type="OrthoDB" id="121051at2759"/>
<dbReference type="Proteomes" id="UP000001997">
    <property type="component" value="Unassembled WGS sequence"/>
</dbReference>
<dbReference type="GO" id="GO:0032302">
    <property type="term" value="C:MutSbeta complex"/>
    <property type="evidence" value="ECO:0007669"/>
    <property type="project" value="EnsemblFungi"/>
</dbReference>
<dbReference type="GO" id="GO:0035861">
    <property type="term" value="C:site of double-strand break"/>
    <property type="evidence" value="ECO:0007669"/>
    <property type="project" value="EnsemblFungi"/>
</dbReference>
<dbReference type="GO" id="GO:0005524">
    <property type="term" value="F:ATP binding"/>
    <property type="evidence" value="ECO:0007669"/>
    <property type="project" value="UniProtKB-KW"/>
</dbReference>
<dbReference type="GO" id="GO:0140664">
    <property type="term" value="F:ATP-dependent DNA damage sensor activity"/>
    <property type="evidence" value="ECO:0007669"/>
    <property type="project" value="InterPro"/>
</dbReference>
<dbReference type="GO" id="GO:0000406">
    <property type="term" value="F:double-strand/single-strand DNA junction binding"/>
    <property type="evidence" value="ECO:0007669"/>
    <property type="project" value="EnsemblFungi"/>
</dbReference>
<dbReference type="GO" id="GO:0000404">
    <property type="term" value="F:heteroduplex DNA loop binding"/>
    <property type="evidence" value="ECO:0007669"/>
    <property type="project" value="EnsemblFungi"/>
</dbReference>
<dbReference type="GO" id="GO:0000403">
    <property type="term" value="F:Y-form DNA binding"/>
    <property type="evidence" value="ECO:0007669"/>
    <property type="project" value="EnsemblFungi"/>
</dbReference>
<dbReference type="GO" id="GO:0007534">
    <property type="term" value="P:gene conversion at mating-type locus"/>
    <property type="evidence" value="ECO:0007669"/>
    <property type="project" value="EnsemblFungi"/>
</dbReference>
<dbReference type="GO" id="GO:0043570">
    <property type="term" value="P:maintenance of DNA repeat elements"/>
    <property type="evidence" value="ECO:0007669"/>
    <property type="project" value="EnsemblFungi"/>
</dbReference>
<dbReference type="GO" id="GO:0000710">
    <property type="term" value="P:meiotic mismatch repair"/>
    <property type="evidence" value="ECO:0007669"/>
    <property type="project" value="EnsemblFungi"/>
</dbReference>
<dbReference type="GO" id="GO:0007131">
    <property type="term" value="P:reciprocal meiotic recombination"/>
    <property type="evidence" value="ECO:0007669"/>
    <property type="project" value="EnsemblFungi"/>
</dbReference>
<dbReference type="GO" id="GO:0000735">
    <property type="term" value="P:removal of nonhomologous ends"/>
    <property type="evidence" value="ECO:0007669"/>
    <property type="project" value="EnsemblFungi"/>
</dbReference>
<dbReference type="GO" id="GO:0043111">
    <property type="term" value="P:replication fork arrest"/>
    <property type="evidence" value="ECO:0007669"/>
    <property type="project" value="EnsemblFungi"/>
</dbReference>
<dbReference type="FunFam" id="3.40.50.300:FF:000870">
    <property type="entry name" value="MutS protein homolog 4"/>
    <property type="match status" value="1"/>
</dbReference>
<dbReference type="Gene3D" id="1.10.1420.10">
    <property type="match status" value="2"/>
</dbReference>
<dbReference type="Gene3D" id="3.40.1170.10">
    <property type="entry name" value="DNA repair protein MutS, domain I"/>
    <property type="match status" value="1"/>
</dbReference>
<dbReference type="Gene3D" id="3.30.420.110">
    <property type="entry name" value="MutS, connector domain"/>
    <property type="match status" value="1"/>
</dbReference>
<dbReference type="Gene3D" id="3.40.50.300">
    <property type="entry name" value="P-loop containing nucleotide triphosphate hydrolases"/>
    <property type="match status" value="1"/>
</dbReference>
<dbReference type="InterPro" id="IPR007695">
    <property type="entry name" value="DNA_mismatch_repair_MutS-lik_N"/>
</dbReference>
<dbReference type="InterPro" id="IPR017261">
    <property type="entry name" value="DNA_mismatch_repair_MutS/MSH"/>
</dbReference>
<dbReference type="InterPro" id="IPR000432">
    <property type="entry name" value="DNA_mismatch_repair_MutS_C"/>
</dbReference>
<dbReference type="InterPro" id="IPR007696">
    <property type="entry name" value="DNA_mismatch_repair_MutS_core"/>
</dbReference>
<dbReference type="InterPro" id="IPR016151">
    <property type="entry name" value="DNA_mismatch_repair_MutS_N"/>
</dbReference>
<dbReference type="InterPro" id="IPR036187">
    <property type="entry name" value="DNA_mismatch_repair_MutS_sf"/>
</dbReference>
<dbReference type="InterPro" id="IPR007860">
    <property type="entry name" value="DNA_mmatch_repair_MutS_con_dom"/>
</dbReference>
<dbReference type="InterPro" id="IPR045076">
    <property type="entry name" value="MutS"/>
</dbReference>
<dbReference type="InterPro" id="IPR036678">
    <property type="entry name" value="MutS_con_dom_sf"/>
</dbReference>
<dbReference type="InterPro" id="IPR027417">
    <property type="entry name" value="P-loop_NTPase"/>
</dbReference>
<dbReference type="NCBIfam" id="NF003810">
    <property type="entry name" value="PRK05399.1"/>
    <property type="match status" value="1"/>
</dbReference>
<dbReference type="PANTHER" id="PTHR11361:SF122">
    <property type="entry name" value="DNA MISMATCH REPAIR PROTEIN MSH3"/>
    <property type="match status" value="1"/>
</dbReference>
<dbReference type="PANTHER" id="PTHR11361">
    <property type="entry name" value="DNA MISMATCH REPAIR PROTEIN MUTS FAMILY MEMBER"/>
    <property type="match status" value="1"/>
</dbReference>
<dbReference type="Pfam" id="PF01624">
    <property type="entry name" value="MutS_I"/>
    <property type="match status" value="1"/>
</dbReference>
<dbReference type="Pfam" id="PF05188">
    <property type="entry name" value="MutS_II"/>
    <property type="match status" value="1"/>
</dbReference>
<dbReference type="Pfam" id="PF05192">
    <property type="entry name" value="MutS_III"/>
    <property type="match status" value="1"/>
</dbReference>
<dbReference type="Pfam" id="PF00488">
    <property type="entry name" value="MutS_V"/>
    <property type="match status" value="1"/>
</dbReference>
<dbReference type="PIRSF" id="PIRSF037677">
    <property type="entry name" value="DNA_mis_repair_Msh6"/>
    <property type="match status" value="1"/>
</dbReference>
<dbReference type="SMART" id="SM00534">
    <property type="entry name" value="MUTSac"/>
    <property type="match status" value="1"/>
</dbReference>
<dbReference type="SMART" id="SM00533">
    <property type="entry name" value="MUTSd"/>
    <property type="match status" value="1"/>
</dbReference>
<dbReference type="SUPFAM" id="SSF55271">
    <property type="entry name" value="DNA repair protein MutS, domain I"/>
    <property type="match status" value="1"/>
</dbReference>
<dbReference type="SUPFAM" id="SSF53150">
    <property type="entry name" value="DNA repair protein MutS, domain II"/>
    <property type="match status" value="1"/>
</dbReference>
<dbReference type="SUPFAM" id="SSF48334">
    <property type="entry name" value="DNA repair protein MutS, domain III"/>
    <property type="match status" value="1"/>
</dbReference>
<dbReference type="SUPFAM" id="SSF52540">
    <property type="entry name" value="P-loop containing nucleoside triphosphate hydrolases"/>
    <property type="match status" value="1"/>
</dbReference>
<dbReference type="PROSITE" id="PS00486">
    <property type="entry name" value="DNA_MISMATCH_REPAIR_2"/>
    <property type="match status" value="1"/>
</dbReference>
<reference key="1">
    <citation type="journal article" date="2009" name="Nature">
        <title>Evolution of pathogenicity and sexual reproduction in eight Candida genomes.</title>
        <authorList>
            <person name="Butler G."/>
            <person name="Rasmussen M.D."/>
            <person name="Lin M.F."/>
            <person name="Santos M.A.S."/>
            <person name="Sakthikumar S."/>
            <person name="Munro C.A."/>
            <person name="Rheinbay E."/>
            <person name="Grabherr M."/>
            <person name="Forche A."/>
            <person name="Reedy J.L."/>
            <person name="Agrafioti I."/>
            <person name="Arnaud M.B."/>
            <person name="Bates S."/>
            <person name="Brown A.J.P."/>
            <person name="Brunke S."/>
            <person name="Costanzo M.C."/>
            <person name="Fitzpatrick D.A."/>
            <person name="de Groot P.W.J."/>
            <person name="Harris D."/>
            <person name="Hoyer L.L."/>
            <person name="Hube B."/>
            <person name="Klis F.M."/>
            <person name="Kodira C."/>
            <person name="Lennard N."/>
            <person name="Logue M.E."/>
            <person name="Martin R."/>
            <person name="Neiman A.M."/>
            <person name="Nikolaou E."/>
            <person name="Quail M.A."/>
            <person name="Quinn J."/>
            <person name="Santos M.C."/>
            <person name="Schmitzberger F.F."/>
            <person name="Sherlock G."/>
            <person name="Shah P."/>
            <person name="Silverstein K.A.T."/>
            <person name="Skrzypek M.S."/>
            <person name="Soll D."/>
            <person name="Staggs R."/>
            <person name="Stansfield I."/>
            <person name="Stumpf M.P.H."/>
            <person name="Sudbery P.E."/>
            <person name="Srikantha T."/>
            <person name="Zeng Q."/>
            <person name="Berman J."/>
            <person name="Berriman M."/>
            <person name="Heitman J."/>
            <person name="Gow N.A.R."/>
            <person name="Lorenz M.C."/>
            <person name="Birren B.W."/>
            <person name="Kellis M."/>
            <person name="Cuomo C.A."/>
        </authorList>
    </citation>
    <scope>NUCLEOTIDE SEQUENCE [LARGE SCALE GENOMIC DNA]</scope>
    <source>
        <strain>ATCC 6260 / CBS 566 / DSM 6381 / JCM 1539 / NBRC 10279 / NRRL Y-324</strain>
    </source>
</reference>
<comment type="function">
    <text evidence="1">Component of the post-replicative DNA mismatch repair system (MMR). Heterodimerizes with MSH2 to form MutS beta, which binds to DNA mismatches thereby initiating DNA repair. MSH3 provides substrate-binding and substrate specificity to the complex. When bound, the MutS beta heterodimer bends the DNA helix and shields approximately 20 base pairs. Acts mainly to repair insertion-deletion loops (IDLs) from 2 to 13 nucleotides in size, but can also repair base-base and single insertion-deletion mismatches that occur during replication. After mismatch binding, forms a ternary complex with the MutL alpha heterodimer, which is thought to be responsible for directing the downstream MMR events, including strand discrimination, excision, and resynthesis. ATP binding and hydrolysis play a pivotal role in mismatch repair functions (By similarity).</text>
</comment>
<comment type="subunit">
    <text evidence="1">Heterodimer consisting of MSH2-MSH3 (MutS beta). Forms a ternary complex with MutL alpha (MLH1-PMS1) (By similarity).</text>
</comment>
<comment type="subcellular location">
    <subcellularLocation>
        <location evidence="1">Nucleus</location>
    </subcellularLocation>
</comment>
<comment type="similarity">
    <text evidence="4">Belongs to the DNA mismatch repair MutS family. MSH3 subfamily.</text>
</comment>
<evidence type="ECO:0000250" key="1"/>
<evidence type="ECO:0000255" key="2"/>
<evidence type="ECO:0000256" key="3">
    <source>
        <dbReference type="SAM" id="MobiDB-lite"/>
    </source>
</evidence>
<evidence type="ECO:0000305" key="4"/>
<protein>
    <recommendedName>
        <fullName>DNA mismatch repair protein MSH3</fullName>
    </recommendedName>
    <alternativeName>
        <fullName>MutS protein homolog 3</fullName>
    </alternativeName>
</protein>
<name>MSH3_PICGU</name>
<proteinExistence type="inferred from homology"/>
<gene>
    <name type="primary">MSH3</name>
    <name type="ORF">PGUG_01807</name>
</gene>
<accession>A5DEV6</accession>
<sequence>MKRGIDIVQALKNSKRSKSSDDSVESKLSKASPDLSQYAAVQISKEDVTVNPEVKSTIDNHKKEPPSIASSIKKSPKTVIGKHANSTKKPKKRTPLDQQFIDLKNEYPDCVLAIQVGYKYKFFGVDAVPVSRILNIMFIPGNLTERDATHDKFAYCSVPDNRLHIHLQRLLTNGLKVAVVSQTESAVLREAESSKGLFLREVTAIYTKATYIEEGSGDFISCITWNGTSAGAVTVQPCTGEIIVEDFSEKEPEALSELQTYLHHLRPSEIIVTDNEATKENDKLSRLLKSFGGARISYKPFDEVSPIEELLPASIANYYVTNHSTTTTQCISQLITYLKDFSLDQIFTVPSNVSKFSTKMYMNLPGNTLKALEIFQNSSGTEKGTLFWHLDHTHTKMGRRMLQKWVSKPLIDNASIQERLDAIESLMNYNYAVEVFEGIIKKIGRDESDWEKSMIKIHYTANGSQNRVTRKEVVQLLLQFRSVIDTVYKFKSSFKDSSISKLLQSMFSELAELASTPIVNDLLSRVKIEAVYREEVEDQKKEFFDLDSHPHEGIKSELNAISELEQALQDELVEIKKIIKKPVDYMTVSREPYLIALRGDSGPQDWLKISATKTVTRYRPPKVSKLYKELLYHQEKLIQQCDEAFATFLKDIDSHYTYFSRLIKIVAEIDCLLSLKATSSSNSGYSKPILSDKQMIKAKRSRNPVIENLTSTSQYVANDIEISYDENRVLIITGPNMGGKSSYVKQVALIALMTQIGCYLPCESAIVGIFDTILVRMGAEDNILKGESTFMVEMSECSTIIKSLTNKSLVILDEIGRGTGTEDGIAIAYSIISYLIEEPRLPLTLFITHYPSLKVLEDTHPKNVANYHMGFMEVAKADQEWPDVTFLYTLKRGVVSNSYGLNVARLAGIPSEIITKAFKVAEALKQDIEDSELSSMGQILKSEQSSASKLVEIDRIVSYI</sequence>
<feature type="chain" id="PRO_0000338528" description="DNA mismatch repair protein MSH3">
    <location>
        <begin position="1"/>
        <end position="960"/>
    </location>
</feature>
<feature type="region of interest" description="Disordered" evidence="3">
    <location>
        <begin position="1"/>
        <end position="35"/>
    </location>
</feature>
<feature type="region of interest" description="Disordered" evidence="3">
    <location>
        <begin position="53"/>
        <end position="93"/>
    </location>
</feature>
<feature type="region of interest" description="Mispair-binding domain" evidence="1">
    <location>
        <begin position="87"/>
        <end position="209"/>
    </location>
</feature>
<feature type="compositionally biased region" description="Basic and acidic residues" evidence="3">
    <location>
        <begin position="18"/>
        <end position="28"/>
    </location>
</feature>
<feature type="compositionally biased region" description="Basic and acidic residues" evidence="3">
    <location>
        <begin position="56"/>
        <end position="65"/>
    </location>
</feature>
<feature type="binding site" evidence="2">
    <location>
        <begin position="734"/>
        <end position="741"/>
    </location>
    <ligand>
        <name>ATP</name>
        <dbReference type="ChEBI" id="CHEBI:30616"/>
    </ligand>
</feature>
<organism>
    <name type="scientific">Meyerozyma guilliermondii (strain ATCC 6260 / CBS 566 / DSM 6381 / JCM 1539 / NBRC 10279 / NRRL Y-324)</name>
    <name type="common">Yeast</name>
    <name type="synonym">Candida guilliermondii</name>
    <dbReference type="NCBI Taxonomy" id="294746"/>
    <lineage>
        <taxon>Eukaryota</taxon>
        <taxon>Fungi</taxon>
        <taxon>Dikarya</taxon>
        <taxon>Ascomycota</taxon>
        <taxon>Saccharomycotina</taxon>
        <taxon>Pichiomycetes</taxon>
        <taxon>Debaryomycetaceae</taxon>
        <taxon>Meyerozyma</taxon>
    </lineage>
</organism>